<protein>
    <recommendedName>
        <fullName evidence="1">tRNA 5-methylaminomethyl-2-thiouridine biosynthesis bifunctional protein MnmC</fullName>
        <shortName evidence="1">tRNA mnm(5)s(2)U biosynthesis bifunctional protein</shortName>
    </recommendedName>
    <domain>
        <recommendedName>
            <fullName evidence="1">tRNA (mnm(5)s(2)U34)-methyltransferase</fullName>
            <ecNumber evidence="1">2.1.1.61</ecNumber>
        </recommendedName>
    </domain>
    <domain>
        <recommendedName>
            <fullName evidence="1">FAD-dependent cmnm(5)s(2)U34 oxidoreductase</fullName>
            <ecNumber evidence="1">1.5.-.-</ecNumber>
        </recommendedName>
    </domain>
</protein>
<feature type="chain" id="PRO_0000348046" description="tRNA 5-methylaminomethyl-2-thiouridine biosynthesis bifunctional protein MnmC">
    <location>
        <begin position="1"/>
        <end position="680"/>
    </location>
</feature>
<feature type="region of interest" description="tRNA (mnm(5)s(2)U34)-methyltransferase">
    <location>
        <begin position="1"/>
        <end position="251"/>
    </location>
</feature>
<feature type="region of interest" description="FAD-dependent cmnm(5)s(2)U34 oxidoreductase">
    <location>
        <begin position="277"/>
        <end position="680"/>
    </location>
</feature>
<dbReference type="EC" id="2.1.1.61" evidence="1"/>
<dbReference type="EC" id="1.5.-.-" evidence="1"/>
<dbReference type="EMBL" id="CP000020">
    <property type="protein sequence ID" value="AAW86196.1"/>
    <property type="molecule type" value="Genomic_DNA"/>
</dbReference>
<dbReference type="RefSeq" id="WP_011262255.1">
    <property type="nucleotide sequence ID" value="NC_006840.2"/>
</dbReference>
<dbReference type="RefSeq" id="YP_205084.1">
    <property type="nucleotide sequence ID" value="NC_006840.2"/>
</dbReference>
<dbReference type="SMR" id="Q5E450"/>
<dbReference type="STRING" id="312309.VF_1701"/>
<dbReference type="EnsemblBacteria" id="AAW86196">
    <property type="protein sequence ID" value="AAW86196"/>
    <property type="gene ID" value="VF_1701"/>
</dbReference>
<dbReference type="GeneID" id="54164396"/>
<dbReference type="KEGG" id="vfi:VF_1701"/>
<dbReference type="PATRIC" id="fig|312309.11.peg.1723"/>
<dbReference type="eggNOG" id="COG0665">
    <property type="taxonomic scope" value="Bacteria"/>
</dbReference>
<dbReference type="eggNOG" id="COG4121">
    <property type="taxonomic scope" value="Bacteria"/>
</dbReference>
<dbReference type="HOGENOM" id="CLU_022427_2_1_6"/>
<dbReference type="OrthoDB" id="9786494at2"/>
<dbReference type="Proteomes" id="UP000000537">
    <property type="component" value="Chromosome I"/>
</dbReference>
<dbReference type="GO" id="GO:0005737">
    <property type="term" value="C:cytoplasm"/>
    <property type="evidence" value="ECO:0007669"/>
    <property type="project" value="UniProtKB-SubCell"/>
</dbReference>
<dbReference type="GO" id="GO:0050660">
    <property type="term" value="F:flavin adenine dinucleotide binding"/>
    <property type="evidence" value="ECO:0007669"/>
    <property type="project" value="UniProtKB-UniRule"/>
</dbReference>
<dbReference type="GO" id="GO:0016645">
    <property type="term" value="F:oxidoreductase activity, acting on the CH-NH group of donors"/>
    <property type="evidence" value="ECO:0007669"/>
    <property type="project" value="InterPro"/>
</dbReference>
<dbReference type="GO" id="GO:0004808">
    <property type="term" value="F:tRNA (5-methylaminomethyl-2-thiouridylate)(34)-methyltransferase activity"/>
    <property type="evidence" value="ECO:0007669"/>
    <property type="project" value="UniProtKB-EC"/>
</dbReference>
<dbReference type="GO" id="GO:0032259">
    <property type="term" value="P:methylation"/>
    <property type="evidence" value="ECO:0007669"/>
    <property type="project" value="UniProtKB-KW"/>
</dbReference>
<dbReference type="GO" id="GO:0002098">
    <property type="term" value="P:tRNA wobble uridine modification"/>
    <property type="evidence" value="ECO:0007669"/>
    <property type="project" value="TreeGrafter"/>
</dbReference>
<dbReference type="FunFam" id="3.40.50.150:FF:000107">
    <property type="entry name" value="tRNA 5-methylaminomethyl-2-thiouridine biosynthesis bifunctional protein MnmC"/>
    <property type="match status" value="1"/>
</dbReference>
<dbReference type="Gene3D" id="3.30.9.10">
    <property type="entry name" value="D-Amino Acid Oxidase, subunit A, domain 2"/>
    <property type="match status" value="1"/>
</dbReference>
<dbReference type="Gene3D" id="3.50.50.60">
    <property type="entry name" value="FAD/NAD(P)-binding domain"/>
    <property type="match status" value="1"/>
</dbReference>
<dbReference type="Gene3D" id="3.40.50.150">
    <property type="entry name" value="Vaccinia Virus protein VP39"/>
    <property type="match status" value="1"/>
</dbReference>
<dbReference type="HAMAP" id="MF_01102">
    <property type="entry name" value="MnmC"/>
    <property type="match status" value="1"/>
</dbReference>
<dbReference type="InterPro" id="IPR006076">
    <property type="entry name" value="FAD-dep_OxRdtase"/>
</dbReference>
<dbReference type="InterPro" id="IPR036188">
    <property type="entry name" value="FAD/NAD-bd_sf"/>
</dbReference>
<dbReference type="InterPro" id="IPR008471">
    <property type="entry name" value="MnmC-like_methylTransf"/>
</dbReference>
<dbReference type="InterPro" id="IPR029063">
    <property type="entry name" value="SAM-dependent_MTases_sf"/>
</dbReference>
<dbReference type="InterPro" id="IPR023032">
    <property type="entry name" value="tRNA_MAMT_biosynth_bifunc_MnmC"/>
</dbReference>
<dbReference type="InterPro" id="IPR047785">
    <property type="entry name" value="tRNA_MNMC2"/>
</dbReference>
<dbReference type="InterPro" id="IPR017610">
    <property type="entry name" value="tRNA_S-uridine_synth_MnmC_C"/>
</dbReference>
<dbReference type="NCBIfam" id="TIGR03197">
    <property type="entry name" value="MnmC_Cterm"/>
    <property type="match status" value="1"/>
</dbReference>
<dbReference type="NCBIfam" id="NF002481">
    <property type="entry name" value="PRK01747.1-2"/>
    <property type="match status" value="1"/>
</dbReference>
<dbReference type="NCBIfam" id="NF002484">
    <property type="entry name" value="PRK01747.1-5"/>
    <property type="match status" value="1"/>
</dbReference>
<dbReference type="NCBIfam" id="NF033855">
    <property type="entry name" value="tRNA_MNMC2"/>
    <property type="match status" value="1"/>
</dbReference>
<dbReference type="PANTHER" id="PTHR13847">
    <property type="entry name" value="SARCOSINE DEHYDROGENASE-RELATED"/>
    <property type="match status" value="1"/>
</dbReference>
<dbReference type="PANTHER" id="PTHR13847:SF283">
    <property type="entry name" value="TRNA 5-METHYLAMINOMETHYL-2-THIOURIDINE BIOSYNTHESIS BIFUNCTIONAL PROTEIN MNMC"/>
    <property type="match status" value="1"/>
</dbReference>
<dbReference type="Pfam" id="PF01266">
    <property type="entry name" value="DAO"/>
    <property type="match status" value="1"/>
</dbReference>
<dbReference type="Pfam" id="PF05430">
    <property type="entry name" value="Methyltransf_30"/>
    <property type="match status" value="1"/>
</dbReference>
<dbReference type="SUPFAM" id="SSF51905">
    <property type="entry name" value="FAD/NAD(P)-binding domain"/>
    <property type="match status" value="1"/>
</dbReference>
<keyword id="KW-0963">Cytoplasm</keyword>
<keyword id="KW-0274">FAD</keyword>
<keyword id="KW-0285">Flavoprotein</keyword>
<keyword id="KW-0489">Methyltransferase</keyword>
<keyword id="KW-0511">Multifunctional enzyme</keyword>
<keyword id="KW-0560">Oxidoreductase</keyword>
<keyword id="KW-1185">Reference proteome</keyword>
<keyword id="KW-0949">S-adenosyl-L-methionine</keyword>
<keyword id="KW-0808">Transferase</keyword>
<keyword id="KW-0819">tRNA processing</keyword>
<organism>
    <name type="scientific">Aliivibrio fischeri (strain ATCC 700601 / ES114)</name>
    <name type="common">Vibrio fischeri</name>
    <dbReference type="NCBI Taxonomy" id="312309"/>
    <lineage>
        <taxon>Bacteria</taxon>
        <taxon>Pseudomonadati</taxon>
        <taxon>Pseudomonadota</taxon>
        <taxon>Gammaproteobacteria</taxon>
        <taxon>Vibrionales</taxon>
        <taxon>Vibrionaceae</taxon>
        <taxon>Aliivibrio</taxon>
    </lineage>
</organism>
<comment type="function">
    <text evidence="1">Catalyzes the last two steps in the biosynthesis of 5-methylaminomethyl-2-thiouridine (mnm(5)s(2)U) at the wobble position (U34) in tRNA. Catalyzes the FAD-dependent demodification of cmnm(5)s(2)U34 to nm(5)s(2)U34, followed by the transfer of a methyl group from S-adenosyl-L-methionine to nm(5)s(2)U34, to form mnm(5)s(2)U34.</text>
</comment>
<comment type="catalytic activity">
    <reaction evidence="1">
        <text>5-aminomethyl-2-thiouridine(34) in tRNA + S-adenosyl-L-methionine = 5-methylaminomethyl-2-thiouridine(34) in tRNA + S-adenosyl-L-homocysteine + H(+)</text>
        <dbReference type="Rhea" id="RHEA:19569"/>
        <dbReference type="Rhea" id="RHEA-COMP:10195"/>
        <dbReference type="Rhea" id="RHEA-COMP:10197"/>
        <dbReference type="ChEBI" id="CHEBI:15378"/>
        <dbReference type="ChEBI" id="CHEBI:57856"/>
        <dbReference type="ChEBI" id="CHEBI:59789"/>
        <dbReference type="ChEBI" id="CHEBI:74454"/>
        <dbReference type="ChEBI" id="CHEBI:74455"/>
        <dbReference type="EC" id="2.1.1.61"/>
    </reaction>
</comment>
<comment type="cofactor">
    <cofactor evidence="1">
        <name>FAD</name>
        <dbReference type="ChEBI" id="CHEBI:57692"/>
    </cofactor>
</comment>
<comment type="subcellular location">
    <subcellularLocation>
        <location evidence="1">Cytoplasm</location>
    </subcellularLocation>
</comment>
<comment type="similarity">
    <text evidence="1">In the N-terminal section; belongs to the methyltransferase superfamily. tRNA (mnm(5)s(2)U34)-methyltransferase family.</text>
</comment>
<comment type="similarity">
    <text evidence="1">In the C-terminal section; belongs to the DAO family.</text>
</comment>
<reference key="1">
    <citation type="journal article" date="2005" name="Proc. Natl. Acad. Sci. U.S.A.">
        <title>Complete genome sequence of Vibrio fischeri: a symbiotic bacterium with pathogenic congeners.</title>
        <authorList>
            <person name="Ruby E.G."/>
            <person name="Urbanowski M."/>
            <person name="Campbell J."/>
            <person name="Dunn A."/>
            <person name="Faini M."/>
            <person name="Gunsalus R."/>
            <person name="Lostroh P."/>
            <person name="Lupp C."/>
            <person name="McCann J."/>
            <person name="Millikan D."/>
            <person name="Schaefer A."/>
            <person name="Stabb E."/>
            <person name="Stevens A."/>
            <person name="Visick K."/>
            <person name="Whistler C."/>
            <person name="Greenberg E.P."/>
        </authorList>
    </citation>
    <scope>NUCLEOTIDE SEQUENCE [LARGE SCALE GENOMIC DNA]</scope>
    <source>
        <strain>ATCC 700601 / ES114</strain>
    </source>
</reference>
<evidence type="ECO:0000255" key="1">
    <source>
        <dbReference type="HAMAP-Rule" id="MF_01102"/>
    </source>
</evidence>
<name>MNMC_ALIF1</name>
<sequence length="680" mass="77237">MSQNHILPQNSITNAVLEWNESGTPVSNDFDDVYFSNDNGLEETRYVFLQQNHLPQRWQEYDQRRFVIGETGFGTGLNFLAVWQWFKEFRSQYPDAPLKELHFVSFEKFPVTKSDLIKAHQAWPELAQFAEQLQEHYPAAVPDCHRLVLEDGMITLDLWFGDIKDCMPQIWMDDKGLIDAWFLDGFAPSKNPEMWNQTLFNNMASLAKKGCTCATFTAAGFVRRGLIEAGFDMKKVKGFGHKREMIAGTLTERTTKANHEVWYARSTKENITDVAIIGGGVASAALATTLIRRGVKVSVYCKDEKSAQGASGNKQGAVYPLLNEKFNSLSRFFAPGFIFARQFIDQAAKHVEFDHDWCGVTQLKWDEKSANKLNKMLEGNFPNELVSSFDIDKTNQMVGLPINMESVHYSLGGWLCPKQLTRGLFEHLSNNPLFTLHCDSEIIALTQNEEQQWLLSTDSNAYQHQAVVVANGHRFTDFEQTKDIPATPVRGQVSHIPTTESLKNLKTVLCYDGYLTPENSKHQTHCIGASYDRRDLDLAFKESDQIENGERLRKCVPNEVWPNDVDTSDNQARVGIRCASRDHLPFIGNVVRFEEMQEEYKNIYKKRHWLREAKDIPVYEGLFCMLTLGSRGLSSAPLLAEALASQIMGDPIPLPNSVLEGLHPGRLWVRRLLKGKPLDI</sequence>
<gene>
    <name evidence="1" type="primary">mnmC</name>
    <name type="ordered locus">VF_1701</name>
</gene>
<proteinExistence type="inferred from homology"/>
<accession>Q5E450</accession>